<protein>
    <recommendedName>
        <fullName>Spermatogenesis-associated protein 9</fullName>
    </recommendedName>
</protein>
<dbReference type="EMBL" id="AK006554">
    <property type="protein sequence ID" value="BAB24651.1"/>
    <property type="molecule type" value="mRNA"/>
</dbReference>
<dbReference type="EMBL" id="AK016416">
    <property type="protein sequence ID" value="BAB30221.1"/>
    <property type="molecule type" value="mRNA"/>
</dbReference>
<dbReference type="EMBL" id="BC048558">
    <property type="protein sequence ID" value="AAH48558.1"/>
    <property type="molecule type" value="mRNA"/>
</dbReference>
<dbReference type="CCDS" id="CCDS26653.1">
    <molecule id="Q9D9R3-1"/>
</dbReference>
<dbReference type="RefSeq" id="NP_083619.1">
    <molecule id="Q9D9R3-1"/>
    <property type="nucleotide sequence ID" value="NM_029343.3"/>
</dbReference>
<dbReference type="RefSeq" id="XP_006517505.1">
    <molecule id="Q9D9R3-1"/>
    <property type="nucleotide sequence ID" value="XM_006517442.4"/>
</dbReference>
<dbReference type="RefSeq" id="XP_006517506.1">
    <molecule id="Q9D9R3-1"/>
    <property type="nucleotide sequence ID" value="XM_006517443.5"/>
</dbReference>
<dbReference type="RefSeq" id="XP_017171114.1">
    <property type="nucleotide sequence ID" value="XM_017315625.1"/>
</dbReference>
<dbReference type="RefSeq" id="XP_036014097.1">
    <molecule id="Q9D9R3-2"/>
    <property type="nucleotide sequence ID" value="XM_036158204.1"/>
</dbReference>
<dbReference type="STRING" id="10090.ENSMUSP00000022081"/>
<dbReference type="PhosphoSitePlus" id="Q9D9R3"/>
<dbReference type="PaxDb" id="10090-ENSMUSP00000022081"/>
<dbReference type="ProteomicsDB" id="261491">
    <molecule id="Q9D9R3-1"/>
</dbReference>
<dbReference type="ProteomicsDB" id="261492">
    <molecule id="Q9D9R3-2"/>
</dbReference>
<dbReference type="Antibodypedia" id="2732">
    <property type="antibodies" value="53 antibodies from 15 providers"/>
</dbReference>
<dbReference type="DNASU" id="75571"/>
<dbReference type="Ensembl" id="ENSMUST00000022081.3">
    <molecule id="Q9D9R3-1"/>
    <property type="protein sequence ID" value="ENSMUSP00000022081.2"/>
    <property type="gene ID" value="ENSMUSG00000021590.8"/>
</dbReference>
<dbReference type="GeneID" id="75571"/>
<dbReference type="KEGG" id="mmu:75571"/>
<dbReference type="UCSC" id="uc007rgb.1">
    <molecule id="Q9D9R3-1"/>
    <property type="organism name" value="mouse"/>
</dbReference>
<dbReference type="AGR" id="MGI:1922821"/>
<dbReference type="CTD" id="83890"/>
<dbReference type="MGI" id="MGI:1922821">
    <property type="gene designation" value="Spata9"/>
</dbReference>
<dbReference type="VEuPathDB" id="HostDB:ENSMUSG00000021590"/>
<dbReference type="eggNOG" id="ENOG502SNFZ">
    <property type="taxonomic scope" value="Eukaryota"/>
</dbReference>
<dbReference type="GeneTree" id="ENSGT00390000014160"/>
<dbReference type="HOGENOM" id="CLU_097205_0_0_1"/>
<dbReference type="InParanoid" id="Q9D9R3"/>
<dbReference type="OMA" id="LSEPMFP"/>
<dbReference type="OrthoDB" id="9442549at2759"/>
<dbReference type="PhylomeDB" id="Q9D9R3"/>
<dbReference type="TreeFam" id="TF338769"/>
<dbReference type="BioGRID-ORCS" id="75571">
    <property type="hits" value="4 hits in 78 CRISPR screens"/>
</dbReference>
<dbReference type="PRO" id="PR:Q9D9R3"/>
<dbReference type="Proteomes" id="UP000000589">
    <property type="component" value="Chromosome 13"/>
</dbReference>
<dbReference type="RNAct" id="Q9D9R3">
    <property type="molecule type" value="protein"/>
</dbReference>
<dbReference type="Bgee" id="ENSMUSG00000021590">
    <property type="expression patterns" value="Expressed in spermatid and 62 other cell types or tissues"/>
</dbReference>
<dbReference type="ExpressionAtlas" id="Q9D9R3">
    <property type="expression patterns" value="baseline and differential"/>
</dbReference>
<dbReference type="GO" id="GO:0016020">
    <property type="term" value="C:membrane"/>
    <property type="evidence" value="ECO:0007669"/>
    <property type="project" value="UniProtKB-SubCell"/>
</dbReference>
<dbReference type="GO" id="GO:0030154">
    <property type="term" value="P:cell differentiation"/>
    <property type="evidence" value="ECO:0007669"/>
    <property type="project" value="UniProtKB-KW"/>
</dbReference>
<dbReference type="GO" id="GO:0007283">
    <property type="term" value="P:spermatogenesis"/>
    <property type="evidence" value="ECO:0007669"/>
    <property type="project" value="UniProtKB-KW"/>
</dbReference>
<dbReference type="InterPro" id="IPR031659">
    <property type="entry name" value="SPATA9"/>
</dbReference>
<dbReference type="PANTHER" id="PTHR35669">
    <property type="entry name" value="SPERMATOGENESIS-ASSOCIATED PROTEIN 9"/>
    <property type="match status" value="1"/>
</dbReference>
<dbReference type="PANTHER" id="PTHR35669:SF1">
    <property type="entry name" value="SPERMATOGENESIS-ASSOCIATED PROTEIN 9"/>
    <property type="match status" value="1"/>
</dbReference>
<dbReference type="Pfam" id="PF15824">
    <property type="entry name" value="SPATA9"/>
    <property type="match status" value="1"/>
</dbReference>
<keyword id="KW-0025">Alternative splicing</keyword>
<keyword id="KW-0217">Developmental protein</keyword>
<keyword id="KW-0221">Differentiation</keyword>
<keyword id="KW-0472">Membrane</keyword>
<keyword id="KW-1185">Reference proteome</keyword>
<keyword id="KW-0744">Spermatogenesis</keyword>
<keyword id="KW-0812">Transmembrane</keyword>
<keyword id="KW-1133">Transmembrane helix</keyword>
<reference key="1">
    <citation type="journal article" date="2005" name="Science">
        <title>The transcriptional landscape of the mammalian genome.</title>
        <authorList>
            <person name="Carninci P."/>
            <person name="Kasukawa T."/>
            <person name="Katayama S."/>
            <person name="Gough J."/>
            <person name="Frith M.C."/>
            <person name="Maeda N."/>
            <person name="Oyama R."/>
            <person name="Ravasi T."/>
            <person name="Lenhard B."/>
            <person name="Wells C."/>
            <person name="Kodzius R."/>
            <person name="Shimokawa K."/>
            <person name="Bajic V.B."/>
            <person name="Brenner S.E."/>
            <person name="Batalov S."/>
            <person name="Forrest A.R."/>
            <person name="Zavolan M."/>
            <person name="Davis M.J."/>
            <person name="Wilming L.G."/>
            <person name="Aidinis V."/>
            <person name="Allen J.E."/>
            <person name="Ambesi-Impiombato A."/>
            <person name="Apweiler R."/>
            <person name="Aturaliya R.N."/>
            <person name="Bailey T.L."/>
            <person name="Bansal M."/>
            <person name="Baxter L."/>
            <person name="Beisel K.W."/>
            <person name="Bersano T."/>
            <person name="Bono H."/>
            <person name="Chalk A.M."/>
            <person name="Chiu K.P."/>
            <person name="Choudhary V."/>
            <person name="Christoffels A."/>
            <person name="Clutterbuck D.R."/>
            <person name="Crowe M.L."/>
            <person name="Dalla E."/>
            <person name="Dalrymple B.P."/>
            <person name="de Bono B."/>
            <person name="Della Gatta G."/>
            <person name="di Bernardo D."/>
            <person name="Down T."/>
            <person name="Engstrom P."/>
            <person name="Fagiolini M."/>
            <person name="Faulkner G."/>
            <person name="Fletcher C.F."/>
            <person name="Fukushima T."/>
            <person name="Furuno M."/>
            <person name="Futaki S."/>
            <person name="Gariboldi M."/>
            <person name="Georgii-Hemming P."/>
            <person name="Gingeras T.R."/>
            <person name="Gojobori T."/>
            <person name="Green R.E."/>
            <person name="Gustincich S."/>
            <person name="Harbers M."/>
            <person name="Hayashi Y."/>
            <person name="Hensch T.K."/>
            <person name="Hirokawa N."/>
            <person name="Hill D."/>
            <person name="Huminiecki L."/>
            <person name="Iacono M."/>
            <person name="Ikeo K."/>
            <person name="Iwama A."/>
            <person name="Ishikawa T."/>
            <person name="Jakt M."/>
            <person name="Kanapin A."/>
            <person name="Katoh M."/>
            <person name="Kawasawa Y."/>
            <person name="Kelso J."/>
            <person name="Kitamura H."/>
            <person name="Kitano H."/>
            <person name="Kollias G."/>
            <person name="Krishnan S.P."/>
            <person name="Kruger A."/>
            <person name="Kummerfeld S.K."/>
            <person name="Kurochkin I.V."/>
            <person name="Lareau L.F."/>
            <person name="Lazarevic D."/>
            <person name="Lipovich L."/>
            <person name="Liu J."/>
            <person name="Liuni S."/>
            <person name="McWilliam S."/>
            <person name="Madan Babu M."/>
            <person name="Madera M."/>
            <person name="Marchionni L."/>
            <person name="Matsuda H."/>
            <person name="Matsuzawa S."/>
            <person name="Miki H."/>
            <person name="Mignone F."/>
            <person name="Miyake S."/>
            <person name="Morris K."/>
            <person name="Mottagui-Tabar S."/>
            <person name="Mulder N."/>
            <person name="Nakano N."/>
            <person name="Nakauchi H."/>
            <person name="Ng P."/>
            <person name="Nilsson R."/>
            <person name="Nishiguchi S."/>
            <person name="Nishikawa S."/>
            <person name="Nori F."/>
            <person name="Ohara O."/>
            <person name="Okazaki Y."/>
            <person name="Orlando V."/>
            <person name="Pang K.C."/>
            <person name="Pavan W.J."/>
            <person name="Pavesi G."/>
            <person name="Pesole G."/>
            <person name="Petrovsky N."/>
            <person name="Piazza S."/>
            <person name="Reed J."/>
            <person name="Reid J.F."/>
            <person name="Ring B.Z."/>
            <person name="Ringwald M."/>
            <person name="Rost B."/>
            <person name="Ruan Y."/>
            <person name="Salzberg S.L."/>
            <person name="Sandelin A."/>
            <person name="Schneider C."/>
            <person name="Schoenbach C."/>
            <person name="Sekiguchi K."/>
            <person name="Semple C.A."/>
            <person name="Seno S."/>
            <person name="Sessa L."/>
            <person name="Sheng Y."/>
            <person name="Shibata Y."/>
            <person name="Shimada H."/>
            <person name="Shimada K."/>
            <person name="Silva D."/>
            <person name="Sinclair B."/>
            <person name="Sperling S."/>
            <person name="Stupka E."/>
            <person name="Sugiura K."/>
            <person name="Sultana R."/>
            <person name="Takenaka Y."/>
            <person name="Taki K."/>
            <person name="Tammoja K."/>
            <person name="Tan S.L."/>
            <person name="Tang S."/>
            <person name="Taylor M.S."/>
            <person name="Tegner J."/>
            <person name="Teichmann S.A."/>
            <person name="Ueda H.R."/>
            <person name="van Nimwegen E."/>
            <person name="Verardo R."/>
            <person name="Wei C.L."/>
            <person name="Yagi K."/>
            <person name="Yamanishi H."/>
            <person name="Zabarovsky E."/>
            <person name="Zhu S."/>
            <person name="Zimmer A."/>
            <person name="Hide W."/>
            <person name="Bult C."/>
            <person name="Grimmond S.M."/>
            <person name="Teasdale R.D."/>
            <person name="Liu E.T."/>
            <person name="Brusic V."/>
            <person name="Quackenbush J."/>
            <person name="Wahlestedt C."/>
            <person name="Mattick J.S."/>
            <person name="Hume D.A."/>
            <person name="Kai C."/>
            <person name="Sasaki D."/>
            <person name="Tomaru Y."/>
            <person name="Fukuda S."/>
            <person name="Kanamori-Katayama M."/>
            <person name="Suzuki M."/>
            <person name="Aoki J."/>
            <person name="Arakawa T."/>
            <person name="Iida J."/>
            <person name="Imamura K."/>
            <person name="Itoh M."/>
            <person name="Kato T."/>
            <person name="Kawaji H."/>
            <person name="Kawagashira N."/>
            <person name="Kawashima T."/>
            <person name="Kojima M."/>
            <person name="Kondo S."/>
            <person name="Konno H."/>
            <person name="Nakano K."/>
            <person name="Ninomiya N."/>
            <person name="Nishio T."/>
            <person name="Okada M."/>
            <person name="Plessy C."/>
            <person name="Shibata K."/>
            <person name="Shiraki T."/>
            <person name="Suzuki S."/>
            <person name="Tagami M."/>
            <person name="Waki K."/>
            <person name="Watahiki A."/>
            <person name="Okamura-Oho Y."/>
            <person name="Suzuki H."/>
            <person name="Kawai J."/>
            <person name="Hayashizaki Y."/>
        </authorList>
    </citation>
    <scope>NUCLEOTIDE SEQUENCE [LARGE SCALE MRNA] (ISOFORMS 1 AND 2)</scope>
    <source>
        <strain>C57BL/6J</strain>
        <tissue>Testis</tissue>
    </source>
</reference>
<reference key="2">
    <citation type="journal article" date="2004" name="Genome Res.">
        <title>The status, quality, and expansion of the NIH full-length cDNA project: the Mammalian Gene Collection (MGC).</title>
        <authorList>
            <consortium name="The MGC Project Team"/>
        </authorList>
    </citation>
    <scope>NUCLEOTIDE SEQUENCE [LARGE SCALE MRNA] (ISOFORM 1)</scope>
    <source>
        <tissue>Testis</tissue>
    </source>
</reference>
<reference key="3">
    <citation type="journal article" date="2003" name="Biol. Reprod.">
        <title>NYD-SP16, a novel gene associated with spermatogenesis of human testis.</title>
        <authorList>
            <person name="Cheng L.J."/>
            <person name="Li J.M."/>
            <person name="Chen J."/>
            <person name="Ge Y.H."/>
            <person name="Yu Z.R."/>
            <person name="Han D.S."/>
            <person name="Zhou Z.M."/>
            <person name="Sha J.H."/>
        </authorList>
    </citation>
    <scope>DEVELOPMENTAL STAGE</scope>
    <source>
        <tissue>Testis</tissue>
    </source>
</reference>
<feature type="chain" id="PRO_0000278447" description="Spermatogenesis-associated protein 9">
    <location>
        <begin position="1"/>
        <end position="252"/>
    </location>
</feature>
<feature type="transmembrane region" description="Helical" evidence="2">
    <location>
        <begin position="145"/>
        <end position="167"/>
    </location>
</feature>
<feature type="region of interest" description="Disordered" evidence="3">
    <location>
        <begin position="208"/>
        <end position="235"/>
    </location>
</feature>
<feature type="compositionally biased region" description="Basic and acidic residues" evidence="3">
    <location>
        <begin position="208"/>
        <end position="221"/>
    </location>
</feature>
<feature type="splice variant" id="VSP_023285" description="In isoform 2." evidence="5">
    <original>MKRGSLFEIISFPAKT</original>
    <variation>AQETSWGQDRRPEEML</variation>
    <location>
        <begin position="127"/>
        <end position="142"/>
    </location>
</feature>
<feature type="splice variant" id="VSP_023286" description="In isoform 2." evidence="5">
    <location>
        <begin position="143"/>
        <end position="252"/>
    </location>
</feature>
<evidence type="ECO:0000250" key="1"/>
<evidence type="ECO:0000255" key="2"/>
<evidence type="ECO:0000256" key="3">
    <source>
        <dbReference type="SAM" id="MobiDB-lite"/>
    </source>
</evidence>
<evidence type="ECO:0000269" key="4">
    <source>
    </source>
</evidence>
<evidence type="ECO:0000303" key="5">
    <source>
    </source>
</evidence>
<comment type="function">
    <text evidence="1">May play at role in testicular development/spermatogenesis and may be an important factor in male infertility.</text>
</comment>
<comment type="subcellular location">
    <subcellularLocation>
        <location evidence="1">Membrane</location>
        <topology evidence="1">Single-pass membrane protein</topology>
    </subcellularLocation>
</comment>
<comment type="alternative products">
    <event type="alternative splicing"/>
    <isoform>
        <id>Q9D9R3-1</id>
        <name>1</name>
        <sequence type="displayed"/>
    </isoform>
    <isoform>
        <id>Q9D9R3-2</id>
        <name>2</name>
        <sequence type="described" ref="VSP_023285 VSP_023286"/>
    </isoform>
</comment>
<comment type="developmental stage">
    <text evidence="4">In the 7-week-old, expressed in spermatogenic cells at every stage, (spermatogonium, primary spermatocyte, spermatid, and mature sperm). Expression levels increased during spermatogenesis. No expression in Leydig cells.</text>
</comment>
<proteinExistence type="evidence at transcript level"/>
<sequence>MEVRPIGWICGQVVKNFSGRLEGLQKAIMDLIDEFKDDLPTILRLSQSSQKTDPVQKTSKVRMALALAKINRGTLIQGLNHISSSSKSVAKLLQPRLAYRLLELRSISHRLLREVNVASQPLHSVQMKRGSLFEIISFPAKTALTSIMYASYAALIYLAVCVNAVLAKIKKIFQEEESIRQNRESENFRKAFSEPALRKPMFSESEIKAKPYRSLPEKPDNLLDQPKPPANKQSNKIQVLHSVFDQLAELNE</sequence>
<name>SPAT9_MOUSE</name>
<gene>
    <name type="primary">Spata9</name>
</gene>
<organism>
    <name type="scientific">Mus musculus</name>
    <name type="common">Mouse</name>
    <dbReference type="NCBI Taxonomy" id="10090"/>
    <lineage>
        <taxon>Eukaryota</taxon>
        <taxon>Metazoa</taxon>
        <taxon>Chordata</taxon>
        <taxon>Craniata</taxon>
        <taxon>Vertebrata</taxon>
        <taxon>Euteleostomi</taxon>
        <taxon>Mammalia</taxon>
        <taxon>Eutheria</taxon>
        <taxon>Euarchontoglires</taxon>
        <taxon>Glires</taxon>
        <taxon>Rodentia</taxon>
        <taxon>Myomorpha</taxon>
        <taxon>Muroidea</taxon>
        <taxon>Muridae</taxon>
        <taxon>Murinae</taxon>
        <taxon>Mus</taxon>
        <taxon>Mus</taxon>
    </lineage>
</organism>
<accession>Q9D9R3</accession>
<accession>Q9D4M8</accession>